<dbReference type="EMBL" id="S66160">
    <property type="protein sequence ID" value="AAB28535.1"/>
    <property type="molecule type" value="mRNA"/>
</dbReference>
<dbReference type="EMBL" id="AP003443">
    <property type="protein sequence ID" value="BAD87657.1"/>
    <property type="molecule type" value="Genomic_DNA"/>
</dbReference>
<dbReference type="EMBL" id="AP003924">
    <property type="protein sequence ID" value="BAD87942.1"/>
    <property type="molecule type" value="Genomic_DNA"/>
</dbReference>
<dbReference type="EMBL" id="AP008207">
    <property type="protein sequence ID" value="BAF05250.1"/>
    <property type="molecule type" value="Genomic_DNA"/>
</dbReference>
<dbReference type="EMBL" id="AP014957">
    <property type="protein sequence ID" value="BAS72697.1"/>
    <property type="molecule type" value="Genomic_DNA"/>
</dbReference>
<dbReference type="EMBL" id="CM000138">
    <property type="protein sequence ID" value="EAZ12333.1"/>
    <property type="molecule type" value="Genomic_DNA"/>
</dbReference>
<dbReference type="EMBL" id="AK243597">
    <property type="protein sequence ID" value="BAH01664.1"/>
    <property type="molecule type" value="mRNA"/>
</dbReference>
<dbReference type="PIR" id="S38740">
    <property type="entry name" value="S38740"/>
</dbReference>
<dbReference type="RefSeq" id="XP_015617308.1">
    <property type="nucleotide sequence ID" value="XM_015761822.1"/>
</dbReference>
<dbReference type="SMR" id="P40392"/>
<dbReference type="BioGRID" id="793712">
    <property type="interactions" value="1"/>
</dbReference>
<dbReference type="FunCoup" id="P40392">
    <property type="interactions" value="2600"/>
</dbReference>
<dbReference type="IntAct" id="P40392">
    <property type="interactions" value="1"/>
</dbReference>
<dbReference type="STRING" id="39947.P40392"/>
<dbReference type="PaxDb" id="39947-P40392"/>
<dbReference type="EnsemblPlants" id="Os01t0558600-01">
    <property type="protein sequence ID" value="Os01t0558600-01"/>
    <property type="gene ID" value="Os01g0558600"/>
</dbReference>
<dbReference type="Gramene" id="Os01t0558600-01">
    <property type="protein sequence ID" value="Os01t0558600-01"/>
    <property type="gene ID" value="Os01g0558600"/>
</dbReference>
<dbReference type="KEGG" id="dosa:Os01g0558600"/>
<dbReference type="eggNOG" id="KOG0084">
    <property type="taxonomic scope" value="Eukaryota"/>
</dbReference>
<dbReference type="HOGENOM" id="CLU_041217_23_1_1"/>
<dbReference type="InParanoid" id="P40392"/>
<dbReference type="OMA" id="PDYHYLF"/>
<dbReference type="OrthoDB" id="9989112at2759"/>
<dbReference type="Proteomes" id="UP000000763">
    <property type="component" value="Chromosome 1"/>
</dbReference>
<dbReference type="Proteomes" id="UP000007752">
    <property type="component" value="Chromosome 1"/>
</dbReference>
<dbReference type="Proteomes" id="UP000059680">
    <property type="component" value="Chromosome 1"/>
</dbReference>
<dbReference type="GO" id="GO:0005886">
    <property type="term" value="C:plasma membrane"/>
    <property type="evidence" value="ECO:0007669"/>
    <property type="project" value="UniProtKB-SubCell"/>
</dbReference>
<dbReference type="GO" id="GO:0005525">
    <property type="term" value="F:GTP binding"/>
    <property type="evidence" value="ECO:0000318"/>
    <property type="project" value="GO_Central"/>
</dbReference>
<dbReference type="GO" id="GO:0003924">
    <property type="term" value="F:GTPase activity"/>
    <property type="evidence" value="ECO:0000318"/>
    <property type="project" value="GO_Central"/>
</dbReference>
<dbReference type="GO" id="GO:0015031">
    <property type="term" value="P:protein transport"/>
    <property type="evidence" value="ECO:0007669"/>
    <property type="project" value="UniProtKB-KW"/>
</dbReference>
<dbReference type="GO" id="GO:0016192">
    <property type="term" value="P:vesicle-mediated transport"/>
    <property type="evidence" value="ECO:0000318"/>
    <property type="project" value="GO_Central"/>
</dbReference>
<dbReference type="CDD" id="cd01869">
    <property type="entry name" value="Rab1_Ypt1"/>
    <property type="match status" value="1"/>
</dbReference>
<dbReference type="FunFam" id="3.40.50.300:FF:000359">
    <property type="entry name" value="Small GTP-binding protein"/>
    <property type="match status" value="1"/>
</dbReference>
<dbReference type="Gene3D" id="3.40.50.300">
    <property type="entry name" value="P-loop containing nucleotide triphosphate hydrolases"/>
    <property type="match status" value="1"/>
</dbReference>
<dbReference type="InterPro" id="IPR027417">
    <property type="entry name" value="P-loop_NTPase"/>
</dbReference>
<dbReference type="InterPro" id="IPR050227">
    <property type="entry name" value="Rab"/>
</dbReference>
<dbReference type="InterPro" id="IPR005225">
    <property type="entry name" value="Small_GTP-bd"/>
</dbReference>
<dbReference type="InterPro" id="IPR001806">
    <property type="entry name" value="Small_GTPase"/>
</dbReference>
<dbReference type="NCBIfam" id="TIGR00231">
    <property type="entry name" value="small_GTP"/>
    <property type="match status" value="1"/>
</dbReference>
<dbReference type="PANTHER" id="PTHR47977">
    <property type="entry name" value="RAS-RELATED PROTEIN RAB"/>
    <property type="match status" value="1"/>
</dbReference>
<dbReference type="Pfam" id="PF00071">
    <property type="entry name" value="Ras"/>
    <property type="match status" value="1"/>
</dbReference>
<dbReference type="PRINTS" id="PR00449">
    <property type="entry name" value="RASTRNSFRMNG"/>
</dbReference>
<dbReference type="SMART" id="SM00177">
    <property type="entry name" value="ARF"/>
    <property type="match status" value="1"/>
</dbReference>
<dbReference type="SMART" id="SM00175">
    <property type="entry name" value="RAB"/>
    <property type="match status" value="1"/>
</dbReference>
<dbReference type="SMART" id="SM00176">
    <property type="entry name" value="RAN"/>
    <property type="match status" value="1"/>
</dbReference>
<dbReference type="SMART" id="SM00173">
    <property type="entry name" value="RAS"/>
    <property type="match status" value="1"/>
</dbReference>
<dbReference type="SMART" id="SM00174">
    <property type="entry name" value="RHO"/>
    <property type="match status" value="1"/>
</dbReference>
<dbReference type="SUPFAM" id="SSF52540">
    <property type="entry name" value="P-loop containing nucleoside triphosphate hydrolases"/>
    <property type="match status" value="1"/>
</dbReference>
<dbReference type="PROSITE" id="PS51419">
    <property type="entry name" value="RAB"/>
    <property type="match status" value="1"/>
</dbReference>
<accession>P40392</accession>
<accession>Q0JLX8</accession>
<accession>Q5JKR5</accession>
<proteinExistence type="evidence at transcript level"/>
<feature type="chain" id="PRO_0000121299" description="Ras-related protein RIC1">
    <location>
        <begin position="1"/>
        <end position="202"/>
    </location>
</feature>
<feature type="region of interest" description="Disordered" evidence="3">
    <location>
        <begin position="174"/>
        <end position="202"/>
    </location>
</feature>
<feature type="short sequence motif" description="Effector region" evidence="4">
    <location>
        <begin position="37"/>
        <end position="45"/>
    </location>
</feature>
<feature type="compositionally biased region" description="Polar residues" evidence="3">
    <location>
        <begin position="174"/>
        <end position="185"/>
    </location>
</feature>
<feature type="binding site" evidence="2">
    <location>
        <begin position="15"/>
        <end position="23"/>
    </location>
    <ligand>
        <name>GTP</name>
        <dbReference type="ChEBI" id="CHEBI:37565"/>
    </ligand>
</feature>
<feature type="binding site" evidence="2">
    <location>
        <begin position="33"/>
        <end position="40"/>
    </location>
    <ligand>
        <name>GTP</name>
        <dbReference type="ChEBI" id="CHEBI:37565"/>
    </ligand>
</feature>
<feature type="binding site" evidence="2">
    <location>
        <begin position="63"/>
        <end position="67"/>
    </location>
    <ligand>
        <name>GTP</name>
        <dbReference type="ChEBI" id="CHEBI:37565"/>
    </ligand>
</feature>
<feature type="binding site" evidence="2">
    <location>
        <begin position="121"/>
        <end position="124"/>
    </location>
    <ligand>
        <name>GTP</name>
        <dbReference type="ChEBI" id="CHEBI:37565"/>
    </ligand>
</feature>
<feature type="binding site" evidence="2">
    <location>
        <begin position="151"/>
        <end position="153"/>
    </location>
    <ligand>
        <name>GTP</name>
        <dbReference type="ChEBI" id="CHEBI:37565"/>
    </ligand>
</feature>
<feature type="lipid moiety-binding region" description="S-geranylgeranyl cysteine" evidence="1">
    <location>
        <position position="200"/>
    </location>
</feature>
<feature type="lipid moiety-binding region" description="S-geranylgeranyl cysteine" evidence="1">
    <location>
        <position position="201"/>
    </location>
</feature>
<feature type="sequence conflict" description="In Ref. 1; AAB28535." evidence="4" ref="1">
    <original>PA</original>
    <variation>GR</variation>
    <location>
        <begin position="177"/>
        <end position="178"/>
    </location>
</feature>
<feature type="sequence conflict" description="In Ref. 1; AAB28535." evidence="4" ref="1">
    <original>RG</original>
    <variation>PR</variation>
    <location>
        <begin position="190"/>
        <end position="191"/>
    </location>
</feature>
<reference key="1">
    <citation type="journal article" date="1993" name="FEBS Lett.">
        <title>Molecular structure of ras-related small GTP-binding protein genes of rice plants and GTPase activities of gene products in Escherichia coli.</title>
        <authorList>
            <person name="Uchimiya H."/>
            <person name="Kidou S."/>
            <person name="Anai T."/>
            <person name="Umeda M."/>
            <person name="Aotsuka S."/>
            <person name="Tsuge T."/>
            <person name="Kato A."/>
        </authorList>
    </citation>
    <scope>NUCLEOTIDE SEQUENCE [MRNA]</scope>
    <source>
        <strain>cv. Yamahoushi</strain>
        <tissue>Callus</tissue>
    </source>
</reference>
<reference key="2">
    <citation type="journal article" date="2002" name="Nature">
        <title>The genome sequence and structure of rice chromosome 1.</title>
        <authorList>
            <person name="Sasaki T."/>
            <person name="Matsumoto T."/>
            <person name="Yamamoto K."/>
            <person name="Sakata K."/>
            <person name="Baba T."/>
            <person name="Katayose Y."/>
            <person name="Wu J."/>
            <person name="Niimura Y."/>
            <person name="Cheng Z."/>
            <person name="Nagamura Y."/>
            <person name="Antonio B.A."/>
            <person name="Kanamori H."/>
            <person name="Hosokawa S."/>
            <person name="Masukawa M."/>
            <person name="Arikawa K."/>
            <person name="Chiden Y."/>
            <person name="Hayashi M."/>
            <person name="Okamoto M."/>
            <person name="Ando T."/>
            <person name="Aoki H."/>
            <person name="Arita K."/>
            <person name="Hamada M."/>
            <person name="Harada C."/>
            <person name="Hijishita S."/>
            <person name="Honda M."/>
            <person name="Ichikawa Y."/>
            <person name="Idonuma A."/>
            <person name="Iijima M."/>
            <person name="Ikeda M."/>
            <person name="Ikeno M."/>
            <person name="Ito S."/>
            <person name="Ito T."/>
            <person name="Ito Y."/>
            <person name="Ito Y."/>
            <person name="Iwabuchi A."/>
            <person name="Kamiya K."/>
            <person name="Karasawa W."/>
            <person name="Katagiri S."/>
            <person name="Kikuta A."/>
            <person name="Kobayashi N."/>
            <person name="Kono I."/>
            <person name="Machita K."/>
            <person name="Maehara T."/>
            <person name="Mizuno H."/>
            <person name="Mizubayashi T."/>
            <person name="Mukai Y."/>
            <person name="Nagasaki H."/>
            <person name="Nakashima M."/>
            <person name="Nakama Y."/>
            <person name="Nakamichi Y."/>
            <person name="Nakamura M."/>
            <person name="Namiki N."/>
            <person name="Negishi M."/>
            <person name="Ohta I."/>
            <person name="Ono N."/>
            <person name="Saji S."/>
            <person name="Sakai K."/>
            <person name="Shibata M."/>
            <person name="Shimokawa T."/>
            <person name="Shomura A."/>
            <person name="Song J."/>
            <person name="Takazaki Y."/>
            <person name="Terasawa K."/>
            <person name="Tsuji K."/>
            <person name="Waki K."/>
            <person name="Yamagata H."/>
            <person name="Yamane H."/>
            <person name="Yoshiki S."/>
            <person name="Yoshihara R."/>
            <person name="Yukawa K."/>
            <person name="Zhong H."/>
            <person name="Iwama H."/>
            <person name="Endo T."/>
            <person name="Ito H."/>
            <person name="Hahn J.H."/>
            <person name="Kim H.-I."/>
            <person name="Eun M.-Y."/>
            <person name="Yano M."/>
            <person name="Jiang J."/>
            <person name="Gojobori T."/>
        </authorList>
    </citation>
    <scope>NUCLEOTIDE SEQUENCE [LARGE SCALE GENOMIC DNA]</scope>
    <source>
        <strain>cv. Nipponbare</strain>
    </source>
</reference>
<reference key="3">
    <citation type="journal article" date="2005" name="Nature">
        <title>The map-based sequence of the rice genome.</title>
        <authorList>
            <consortium name="International rice genome sequencing project (IRGSP)"/>
        </authorList>
    </citation>
    <scope>NUCLEOTIDE SEQUENCE [LARGE SCALE GENOMIC DNA]</scope>
    <source>
        <strain>cv. Nipponbare</strain>
    </source>
</reference>
<reference key="4">
    <citation type="journal article" date="2008" name="Nucleic Acids Res.">
        <title>The rice annotation project database (RAP-DB): 2008 update.</title>
        <authorList>
            <consortium name="The rice annotation project (RAP)"/>
        </authorList>
    </citation>
    <scope>GENOME REANNOTATION</scope>
    <source>
        <strain>cv. Nipponbare</strain>
    </source>
</reference>
<reference key="5">
    <citation type="journal article" date="2013" name="Rice">
        <title>Improvement of the Oryza sativa Nipponbare reference genome using next generation sequence and optical map data.</title>
        <authorList>
            <person name="Kawahara Y."/>
            <person name="de la Bastide M."/>
            <person name="Hamilton J.P."/>
            <person name="Kanamori H."/>
            <person name="McCombie W.R."/>
            <person name="Ouyang S."/>
            <person name="Schwartz D.C."/>
            <person name="Tanaka T."/>
            <person name="Wu J."/>
            <person name="Zhou S."/>
            <person name="Childs K.L."/>
            <person name="Davidson R.M."/>
            <person name="Lin H."/>
            <person name="Quesada-Ocampo L."/>
            <person name="Vaillancourt B."/>
            <person name="Sakai H."/>
            <person name="Lee S.S."/>
            <person name="Kim J."/>
            <person name="Numa H."/>
            <person name="Itoh T."/>
            <person name="Buell C.R."/>
            <person name="Matsumoto T."/>
        </authorList>
    </citation>
    <scope>GENOME REANNOTATION</scope>
    <source>
        <strain>cv. Nipponbare</strain>
    </source>
</reference>
<reference key="6">
    <citation type="journal article" date="2005" name="PLoS Biol.">
        <title>The genomes of Oryza sativa: a history of duplications.</title>
        <authorList>
            <person name="Yu J."/>
            <person name="Wang J."/>
            <person name="Lin W."/>
            <person name="Li S."/>
            <person name="Li H."/>
            <person name="Zhou J."/>
            <person name="Ni P."/>
            <person name="Dong W."/>
            <person name="Hu S."/>
            <person name="Zeng C."/>
            <person name="Zhang J."/>
            <person name="Zhang Y."/>
            <person name="Li R."/>
            <person name="Xu Z."/>
            <person name="Li S."/>
            <person name="Li X."/>
            <person name="Zheng H."/>
            <person name="Cong L."/>
            <person name="Lin L."/>
            <person name="Yin J."/>
            <person name="Geng J."/>
            <person name="Li G."/>
            <person name="Shi J."/>
            <person name="Liu J."/>
            <person name="Lv H."/>
            <person name="Li J."/>
            <person name="Wang J."/>
            <person name="Deng Y."/>
            <person name="Ran L."/>
            <person name="Shi X."/>
            <person name="Wang X."/>
            <person name="Wu Q."/>
            <person name="Li C."/>
            <person name="Ren X."/>
            <person name="Wang J."/>
            <person name="Wang X."/>
            <person name="Li D."/>
            <person name="Liu D."/>
            <person name="Zhang X."/>
            <person name="Ji Z."/>
            <person name="Zhao W."/>
            <person name="Sun Y."/>
            <person name="Zhang Z."/>
            <person name="Bao J."/>
            <person name="Han Y."/>
            <person name="Dong L."/>
            <person name="Ji J."/>
            <person name="Chen P."/>
            <person name="Wu S."/>
            <person name="Liu J."/>
            <person name="Xiao Y."/>
            <person name="Bu D."/>
            <person name="Tan J."/>
            <person name="Yang L."/>
            <person name="Ye C."/>
            <person name="Zhang J."/>
            <person name="Xu J."/>
            <person name="Zhou Y."/>
            <person name="Yu Y."/>
            <person name="Zhang B."/>
            <person name="Zhuang S."/>
            <person name="Wei H."/>
            <person name="Liu B."/>
            <person name="Lei M."/>
            <person name="Yu H."/>
            <person name="Li Y."/>
            <person name="Xu H."/>
            <person name="Wei S."/>
            <person name="He X."/>
            <person name="Fang L."/>
            <person name="Zhang Z."/>
            <person name="Zhang Y."/>
            <person name="Huang X."/>
            <person name="Su Z."/>
            <person name="Tong W."/>
            <person name="Li J."/>
            <person name="Tong Z."/>
            <person name="Li S."/>
            <person name="Ye J."/>
            <person name="Wang L."/>
            <person name="Fang L."/>
            <person name="Lei T."/>
            <person name="Chen C.-S."/>
            <person name="Chen H.-C."/>
            <person name="Xu Z."/>
            <person name="Li H."/>
            <person name="Huang H."/>
            <person name="Zhang F."/>
            <person name="Xu H."/>
            <person name="Li N."/>
            <person name="Zhao C."/>
            <person name="Li S."/>
            <person name="Dong L."/>
            <person name="Huang Y."/>
            <person name="Li L."/>
            <person name="Xi Y."/>
            <person name="Qi Q."/>
            <person name="Li W."/>
            <person name="Zhang B."/>
            <person name="Hu W."/>
            <person name="Zhang Y."/>
            <person name="Tian X."/>
            <person name="Jiao Y."/>
            <person name="Liang X."/>
            <person name="Jin J."/>
            <person name="Gao L."/>
            <person name="Zheng W."/>
            <person name="Hao B."/>
            <person name="Liu S.-M."/>
            <person name="Wang W."/>
            <person name="Yuan L."/>
            <person name="Cao M."/>
            <person name="McDermott J."/>
            <person name="Samudrala R."/>
            <person name="Wang J."/>
            <person name="Wong G.K.-S."/>
            <person name="Yang H."/>
        </authorList>
    </citation>
    <scope>NUCLEOTIDE SEQUENCE [LARGE SCALE GENOMIC DNA]</scope>
    <source>
        <strain>cv. Nipponbare</strain>
    </source>
</reference>
<reference key="7">
    <citation type="submission" date="2006-10" db="EMBL/GenBank/DDBJ databases">
        <title>Oryza sativa full length cDNA.</title>
        <authorList>
            <consortium name="The rice full-length cDNA consortium"/>
        </authorList>
    </citation>
    <scope>NUCLEOTIDE SEQUENCE [LARGE SCALE MRNA]</scope>
    <source>
        <strain>cv. Nipponbare</strain>
    </source>
</reference>
<keyword id="KW-1003">Cell membrane</keyword>
<keyword id="KW-0342">GTP-binding</keyword>
<keyword id="KW-0449">Lipoprotein</keyword>
<keyword id="KW-0472">Membrane</keyword>
<keyword id="KW-0547">Nucleotide-binding</keyword>
<keyword id="KW-0636">Prenylation</keyword>
<keyword id="KW-0653">Protein transport</keyword>
<keyword id="KW-1185">Reference proteome</keyword>
<keyword id="KW-0813">Transport</keyword>
<protein>
    <recommendedName>
        <fullName>Ras-related protein RIC1</fullName>
    </recommendedName>
</protein>
<evidence type="ECO:0000250" key="1"/>
<evidence type="ECO:0000250" key="2">
    <source>
        <dbReference type="UniProtKB" id="P62820"/>
    </source>
</evidence>
<evidence type="ECO:0000256" key="3">
    <source>
        <dbReference type="SAM" id="MobiDB-lite"/>
    </source>
</evidence>
<evidence type="ECO:0000305" key="4"/>
<evidence type="ECO:0000312" key="5">
    <source>
        <dbReference type="EMBL" id="EAZ12333.1"/>
    </source>
</evidence>
<name>RIC1_ORYSJ</name>
<organism>
    <name type="scientific">Oryza sativa subsp. japonica</name>
    <name type="common">Rice</name>
    <dbReference type="NCBI Taxonomy" id="39947"/>
    <lineage>
        <taxon>Eukaryota</taxon>
        <taxon>Viridiplantae</taxon>
        <taxon>Streptophyta</taxon>
        <taxon>Embryophyta</taxon>
        <taxon>Tracheophyta</taxon>
        <taxon>Spermatophyta</taxon>
        <taxon>Magnoliopsida</taxon>
        <taxon>Liliopsida</taxon>
        <taxon>Poales</taxon>
        <taxon>Poaceae</taxon>
        <taxon>BOP clade</taxon>
        <taxon>Oryzoideae</taxon>
        <taxon>Oryzeae</taxon>
        <taxon>Oryzinae</taxon>
        <taxon>Oryza</taxon>
        <taxon>Oryza sativa</taxon>
    </lineage>
</organism>
<gene>
    <name type="primary">RIC1</name>
    <name type="ordered locus">Os01g0558600</name>
    <name type="ordered locus">LOC_Os01g37800</name>
    <name type="ORF">B1064G04.9</name>
    <name type="ORF">B1144D11.31</name>
    <name evidence="5" type="ORF">OsJ_02222</name>
</gene>
<comment type="function">
    <text>Possesses GTPase activity.</text>
</comment>
<comment type="subcellular location">
    <subcellularLocation>
        <location evidence="4">Cell membrane</location>
        <topology evidence="4">Lipid-anchor</topology>
        <orientation evidence="4">Cytoplasmic side</orientation>
    </subcellularLocation>
</comment>
<comment type="similarity">
    <text evidence="4">Belongs to the small GTPase superfamily. Rab family.</text>
</comment>
<sequence>MNPEYDYLFKLLLIGDSGVGKSCLLLRFADDSYLESYISTIGVDFKIRTVEQDGKTIKLQIWDTAGQERFRTITSSYYRGAHGIIVVYDVTDQESFNNVKQWLNEIDRYASENVNKLLVGNKCDLAENRVVSYEAGKALADEIGIPFLETSAKDATNVEKAFMTMAGEIKNRMASQPATNASKPATVQMRGQPVAQQSSCCS</sequence>